<comment type="function">
    <text evidence="1">Probable GTPase. May also bind and hydrolyze ATP. May function as chaperone (By similarity).</text>
</comment>
<comment type="subunit">
    <text evidence="1">Homodimer.</text>
</comment>
<comment type="similarity">
    <text evidence="3">Belongs to the SIMIBI class G3E GTPase family. ArgK/MeaB subfamily.</text>
</comment>
<comment type="sequence caution" evidence="2">
    <conflict type="erroneous initiation">
        <sequence resource="EMBL-CDS" id="AAK45810"/>
    </conflict>
    <text>Truncated N-terminus.</text>
</comment>
<reference key="1">
    <citation type="journal article" date="2002" name="J. Bacteriol.">
        <title>Whole-genome comparison of Mycobacterium tuberculosis clinical and laboratory strains.</title>
        <authorList>
            <person name="Fleischmann R.D."/>
            <person name="Alland D."/>
            <person name="Eisen J.A."/>
            <person name="Carpenter L."/>
            <person name="White O."/>
            <person name="Peterson J.D."/>
            <person name="DeBoy R.T."/>
            <person name="Dodson R.J."/>
            <person name="Gwinn M.L."/>
            <person name="Haft D.H."/>
            <person name="Hickey E.K."/>
            <person name="Kolonay J.F."/>
            <person name="Nelson W.C."/>
            <person name="Umayam L.A."/>
            <person name="Ermolaeva M.D."/>
            <person name="Salzberg S.L."/>
            <person name="Delcher A."/>
            <person name="Utterback T.R."/>
            <person name="Weidman J.F."/>
            <person name="Khouri H.M."/>
            <person name="Gill J."/>
            <person name="Mikula A."/>
            <person name="Bishai W."/>
            <person name="Jacobs W.R. Jr."/>
            <person name="Venter J.C."/>
            <person name="Fraser C.M."/>
        </authorList>
    </citation>
    <scope>NUCLEOTIDE SEQUENCE [LARGE SCALE GENOMIC DNA]</scope>
    <source>
        <strain>CDC 1551 / Oshkosh</strain>
    </source>
</reference>
<gene>
    <name type="ordered locus">MT1543</name>
</gene>
<feature type="chain" id="PRO_0000426868" description="Probable GTPase MT1543">
    <location>
        <begin position="1"/>
        <end position="336"/>
    </location>
</feature>
<feature type="binding site" evidence="1">
    <location>
        <begin position="67"/>
        <end position="75"/>
    </location>
    <ligand>
        <name>GTP</name>
        <dbReference type="ChEBI" id="CHEBI:37565"/>
    </ligand>
</feature>
<feature type="binding site" evidence="1">
    <location>
        <position position="209"/>
    </location>
    <ligand>
        <name>GTP</name>
        <dbReference type="ChEBI" id="CHEBI:37565"/>
    </ligand>
</feature>
<feature type="binding site" evidence="1">
    <location>
        <begin position="245"/>
        <end position="247"/>
    </location>
    <ligand>
        <name>GTP</name>
        <dbReference type="ChEBI" id="CHEBI:37565"/>
    </ligand>
</feature>
<name>Y1496_MYCTO</name>
<dbReference type="EC" id="3.6.-.-"/>
<dbReference type="EMBL" id="AE000516">
    <property type="protein sequence ID" value="AAK45810.1"/>
    <property type="status" value="ALT_INIT"/>
    <property type="molecule type" value="Genomic_DNA"/>
</dbReference>
<dbReference type="PIR" id="C70712">
    <property type="entry name" value="C70712"/>
</dbReference>
<dbReference type="SMR" id="P9WPZ0"/>
<dbReference type="KEGG" id="mtc:MT1543"/>
<dbReference type="PATRIC" id="fig|83331.31.peg.1660"/>
<dbReference type="HOGENOM" id="CLU_043725_2_2_11"/>
<dbReference type="Proteomes" id="UP000001020">
    <property type="component" value="Chromosome"/>
</dbReference>
<dbReference type="GO" id="GO:0005737">
    <property type="term" value="C:cytoplasm"/>
    <property type="evidence" value="ECO:0007669"/>
    <property type="project" value="TreeGrafter"/>
</dbReference>
<dbReference type="GO" id="GO:0005524">
    <property type="term" value="F:ATP binding"/>
    <property type="evidence" value="ECO:0007669"/>
    <property type="project" value="UniProtKB-KW"/>
</dbReference>
<dbReference type="GO" id="GO:0005525">
    <property type="term" value="F:GTP binding"/>
    <property type="evidence" value="ECO:0007669"/>
    <property type="project" value="UniProtKB-KW"/>
</dbReference>
<dbReference type="GO" id="GO:0003924">
    <property type="term" value="F:GTPase activity"/>
    <property type="evidence" value="ECO:0007669"/>
    <property type="project" value="InterPro"/>
</dbReference>
<dbReference type="CDD" id="cd03114">
    <property type="entry name" value="MMAA-like"/>
    <property type="match status" value="1"/>
</dbReference>
<dbReference type="Gene3D" id="1.10.287.130">
    <property type="match status" value="1"/>
</dbReference>
<dbReference type="Gene3D" id="1.20.5.170">
    <property type="match status" value="1"/>
</dbReference>
<dbReference type="Gene3D" id="3.40.50.300">
    <property type="entry name" value="P-loop containing nucleotide triphosphate hydrolases"/>
    <property type="match status" value="1"/>
</dbReference>
<dbReference type="InterPro" id="IPR005129">
    <property type="entry name" value="GTPase_ArgK"/>
</dbReference>
<dbReference type="InterPro" id="IPR027417">
    <property type="entry name" value="P-loop_NTPase"/>
</dbReference>
<dbReference type="NCBIfam" id="TIGR00750">
    <property type="entry name" value="lao"/>
    <property type="match status" value="1"/>
</dbReference>
<dbReference type="NCBIfam" id="NF006958">
    <property type="entry name" value="PRK09435.1"/>
    <property type="match status" value="1"/>
</dbReference>
<dbReference type="PANTHER" id="PTHR23408:SF3">
    <property type="entry name" value="METHYLMALONIC ACIDURIA TYPE A PROTEIN, MITOCHONDRIAL"/>
    <property type="match status" value="1"/>
</dbReference>
<dbReference type="PANTHER" id="PTHR23408">
    <property type="entry name" value="METHYLMALONYL-COA MUTASE"/>
    <property type="match status" value="1"/>
</dbReference>
<dbReference type="Pfam" id="PF03308">
    <property type="entry name" value="MeaB"/>
    <property type="match status" value="1"/>
</dbReference>
<dbReference type="SUPFAM" id="SSF52540">
    <property type="entry name" value="P-loop containing nucleoside triphosphate hydrolases"/>
    <property type="match status" value="1"/>
</dbReference>
<sequence>MAMMAASHDDDTVDGLATAVRGGDRAALPRAITLVESTRPDHREQAQQLLLRLLPDSGNAHRVGITGVPGVGKSTAIEALGMHLIERGHRVAVLAVDPSSTRTGGSILGDKTRMARLAVHPNAYIRPSPTSGTLGGVTRATRETVVLLEAAGFDVILIETVGVGQSEVAVANMVDTFVLLTLARTGDQLQGIKKGVLELADIVVVNKADGEHHKEARLAARELSAAIRLIYPREALWRPPVLTMSAVEGRGLAELWDTVERHRQVLTGAGEFDARRRDQQVDWTWQLVRDAVLDRVWSNPTVRKVRSELERRVRAGELTPALAAQQILEIANLTDR</sequence>
<proteinExistence type="inferred from homology"/>
<keyword id="KW-0067">ATP-binding</keyword>
<keyword id="KW-0143">Chaperone</keyword>
<keyword id="KW-0342">GTP-binding</keyword>
<keyword id="KW-0378">Hydrolase</keyword>
<keyword id="KW-0547">Nucleotide-binding</keyword>
<keyword id="KW-1185">Reference proteome</keyword>
<accession>P9WPZ0</accession>
<accession>L0T711</accession>
<accession>P63577</accession>
<accession>P71777</accession>
<protein>
    <recommendedName>
        <fullName>Probable GTPase MT1543</fullName>
        <ecNumber>3.6.-.-</ecNumber>
    </recommendedName>
</protein>
<organism>
    <name type="scientific">Mycobacterium tuberculosis (strain CDC 1551 / Oshkosh)</name>
    <dbReference type="NCBI Taxonomy" id="83331"/>
    <lineage>
        <taxon>Bacteria</taxon>
        <taxon>Bacillati</taxon>
        <taxon>Actinomycetota</taxon>
        <taxon>Actinomycetes</taxon>
        <taxon>Mycobacteriales</taxon>
        <taxon>Mycobacteriaceae</taxon>
        <taxon>Mycobacterium</taxon>
        <taxon>Mycobacterium tuberculosis complex</taxon>
    </lineage>
</organism>
<evidence type="ECO:0000250" key="1"/>
<evidence type="ECO:0000250" key="2">
    <source>
        <dbReference type="UniProtKB" id="P9WPZ1"/>
    </source>
</evidence>
<evidence type="ECO:0000305" key="3"/>